<dbReference type="EC" id="3.5.1.16" evidence="1"/>
<dbReference type="EMBL" id="AP009240">
    <property type="protein sequence ID" value="BAG79774.1"/>
    <property type="molecule type" value="Genomic_DNA"/>
</dbReference>
<dbReference type="RefSeq" id="WP_001295506.1">
    <property type="nucleotide sequence ID" value="NC_011415.1"/>
</dbReference>
<dbReference type="SMR" id="B6I5H3"/>
<dbReference type="MEROPS" id="M20.974"/>
<dbReference type="GeneID" id="75169401"/>
<dbReference type="KEGG" id="ecy:ECSE_4250"/>
<dbReference type="HOGENOM" id="CLU_021802_2_4_6"/>
<dbReference type="UniPathway" id="UPA00068">
    <property type="reaction ID" value="UER00110"/>
</dbReference>
<dbReference type="Proteomes" id="UP000008199">
    <property type="component" value="Chromosome"/>
</dbReference>
<dbReference type="GO" id="GO:0005737">
    <property type="term" value="C:cytoplasm"/>
    <property type="evidence" value="ECO:0007669"/>
    <property type="project" value="UniProtKB-SubCell"/>
</dbReference>
<dbReference type="GO" id="GO:0008777">
    <property type="term" value="F:acetylornithine deacetylase activity"/>
    <property type="evidence" value="ECO:0007669"/>
    <property type="project" value="UniProtKB-UniRule"/>
</dbReference>
<dbReference type="GO" id="GO:0008270">
    <property type="term" value="F:zinc ion binding"/>
    <property type="evidence" value="ECO:0007669"/>
    <property type="project" value="UniProtKB-UniRule"/>
</dbReference>
<dbReference type="GO" id="GO:0006526">
    <property type="term" value="P:L-arginine biosynthetic process"/>
    <property type="evidence" value="ECO:0007669"/>
    <property type="project" value="UniProtKB-UniRule"/>
</dbReference>
<dbReference type="CDD" id="cd03894">
    <property type="entry name" value="M20_ArgE"/>
    <property type="match status" value="1"/>
</dbReference>
<dbReference type="FunFam" id="3.30.70.360:FF:000003">
    <property type="entry name" value="Acetylornithine deacetylase"/>
    <property type="match status" value="1"/>
</dbReference>
<dbReference type="Gene3D" id="3.30.70.360">
    <property type="match status" value="1"/>
</dbReference>
<dbReference type="Gene3D" id="3.40.630.10">
    <property type="entry name" value="Zn peptidases"/>
    <property type="match status" value="1"/>
</dbReference>
<dbReference type="HAMAP" id="MF_01108">
    <property type="entry name" value="ArgE"/>
    <property type="match status" value="1"/>
</dbReference>
<dbReference type="InterPro" id="IPR010169">
    <property type="entry name" value="AcOrn-deacetyl"/>
</dbReference>
<dbReference type="InterPro" id="IPR001261">
    <property type="entry name" value="ArgE/DapE_CS"/>
</dbReference>
<dbReference type="InterPro" id="IPR036264">
    <property type="entry name" value="Bact_exopeptidase_dim_dom"/>
</dbReference>
<dbReference type="InterPro" id="IPR002933">
    <property type="entry name" value="Peptidase_M20"/>
</dbReference>
<dbReference type="InterPro" id="IPR011650">
    <property type="entry name" value="Peptidase_M20_dimer"/>
</dbReference>
<dbReference type="InterPro" id="IPR050072">
    <property type="entry name" value="Peptidase_M20A"/>
</dbReference>
<dbReference type="NCBIfam" id="TIGR01892">
    <property type="entry name" value="AcOrn-deacetyl"/>
    <property type="match status" value="1"/>
</dbReference>
<dbReference type="NCBIfam" id="NF003474">
    <property type="entry name" value="PRK05111.1"/>
    <property type="match status" value="1"/>
</dbReference>
<dbReference type="PANTHER" id="PTHR43808">
    <property type="entry name" value="ACETYLORNITHINE DEACETYLASE"/>
    <property type="match status" value="1"/>
</dbReference>
<dbReference type="PANTHER" id="PTHR43808:SF1">
    <property type="entry name" value="ACETYLORNITHINE DEACETYLASE"/>
    <property type="match status" value="1"/>
</dbReference>
<dbReference type="Pfam" id="PF07687">
    <property type="entry name" value="M20_dimer"/>
    <property type="match status" value="1"/>
</dbReference>
<dbReference type="Pfam" id="PF01546">
    <property type="entry name" value="Peptidase_M20"/>
    <property type="match status" value="1"/>
</dbReference>
<dbReference type="SUPFAM" id="SSF55031">
    <property type="entry name" value="Bacterial exopeptidase dimerisation domain"/>
    <property type="match status" value="1"/>
</dbReference>
<dbReference type="SUPFAM" id="SSF53187">
    <property type="entry name" value="Zn-dependent exopeptidases"/>
    <property type="match status" value="1"/>
</dbReference>
<dbReference type="PROSITE" id="PS00758">
    <property type="entry name" value="ARGE_DAPE_CPG2_1"/>
    <property type="match status" value="1"/>
</dbReference>
<dbReference type="PROSITE" id="PS00759">
    <property type="entry name" value="ARGE_DAPE_CPG2_2"/>
    <property type="match status" value="1"/>
</dbReference>
<name>ARGE_ECOSE</name>
<proteinExistence type="inferred from homology"/>
<feature type="chain" id="PRO_1000137067" description="Acetylornithine deacetylase">
    <location>
        <begin position="1"/>
        <end position="383"/>
    </location>
</feature>
<feature type="active site" evidence="1">
    <location>
        <position position="82"/>
    </location>
</feature>
<feature type="active site" evidence="1">
    <location>
        <position position="144"/>
    </location>
</feature>
<feature type="binding site" evidence="1">
    <location>
        <position position="80"/>
    </location>
    <ligand>
        <name>Zn(2+)</name>
        <dbReference type="ChEBI" id="CHEBI:29105"/>
        <label>1</label>
    </ligand>
</feature>
<feature type="binding site" evidence="1">
    <location>
        <position position="112"/>
    </location>
    <ligand>
        <name>Zn(2+)</name>
        <dbReference type="ChEBI" id="CHEBI:29105"/>
        <label>1</label>
    </ligand>
</feature>
<feature type="binding site" evidence="1">
    <location>
        <position position="112"/>
    </location>
    <ligand>
        <name>Zn(2+)</name>
        <dbReference type="ChEBI" id="CHEBI:29105"/>
        <label>2</label>
    </ligand>
</feature>
<feature type="binding site" evidence="1">
    <location>
        <position position="145"/>
    </location>
    <ligand>
        <name>Zn(2+)</name>
        <dbReference type="ChEBI" id="CHEBI:29105"/>
        <label>2</label>
    </ligand>
</feature>
<feature type="binding site" evidence="1">
    <location>
        <position position="169"/>
    </location>
    <ligand>
        <name>Zn(2+)</name>
        <dbReference type="ChEBI" id="CHEBI:29105"/>
        <label>1</label>
    </ligand>
</feature>
<feature type="binding site" evidence="1">
    <location>
        <position position="355"/>
    </location>
    <ligand>
        <name>Zn(2+)</name>
        <dbReference type="ChEBI" id="CHEBI:29105"/>
        <label>2</label>
    </ligand>
</feature>
<accession>B6I5H3</accession>
<protein>
    <recommendedName>
        <fullName evidence="1">Acetylornithine deacetylase</fullName>
        <shortName evidence="1">AO</shortName>
        <shortName evidence="1">Acetylornithinase</shortName>
        <ecNumber evidence="1">3.5.1.16</ecNumber>
    </recommendedName>
    <alternativeName>
        <fullName evidence="1">N-acetylornithinase</fullName>
        <shortName evidence="1">NAO</shortName>
    </alternativeName>
</protein>
<evidence type="ECO:0000255" key="1">
    <source>
        <dbReference type="HAMAP-Rule" id="MF_01108"/>
    </source>
</evidence>
<comment type="function">
    <text evidence="1">Catalyzes the hydrolysis of the amide bond of N(2)-acetylated L-amino acids. Cleaves the acetyl group from N-acetyl-L-ornithine to form L-ornithine, an intermediate in L-arginine biosynthesis pathway, and a branchpoint in the synthesis of polyamines.</text>
</comment>
<comment type="catalytic activity">
    <reaction evidence="1">
        <text>N(2)-acetyl-L-ornithine + H2O = L-ornithine + acetate</text>
        <dbReference type="Rhea" id="RHEA:15941"/>
        <dbReference type="ChEBI" id="CHEBI:15377"/>
        <dbReference type="ChEBI" id="CHEBI:30089"/>
        <dbReference type="ChEBI" id="CHEBI:46911"/>
        <dbReference type="ChEBI" id="CHEBI:57805"/>
        <dbReference type="EC" id="3.5.1.16"/>
    </reaction>
</comment>
<comment type="cofactor">
    <cofactor evidence="1">
        <name>Zn(2+)</name>
        <dbReference type="ChEBI" id="CHEBI:29105"/>
    </cofactor>
    <cofactor evidence="1">
        <name>Co(2+)</name>
        <dbReference type="ChEBI" id="CHEBI:48828"/>
    </cofactor>
    <text evidence="1">Binds 2 Zn(2+) or Co(2+) ions per subunit.</text>
</comment>
<comment type="cofactor">
    <cofactor evidence="1">
        <name>glutathione</name>
        <dbReference type="ChEBI" id="CHEBI:57925"/>
    </cofactor>
</comment>
<comment type="pathway">
    <text evidence="1">Amino-acid biosynthesis; L-arginine biosynthesis; L-ornithine from N(2)-acetyl-L-ornithine (linear): step 1/1.</text>
</comment>
<comment type="subunit">
    <text evidence="1">Homodimer.</text>
</comment>
<comment type="subcellular location">
    <subcellularLocation>
        <location evidence="1">Cytoplasm</location>
    </subcellularLocation>
</comment>
<comment type="similarity">
    <text evidence="1">Belongs to the peptidase M20A family. ArgE subfamily.</text>
</comment>
<keyword id="KW-0028">Amino-acid biosynthesis</keyword>
<keyword id="KW-0055">Arginine biosynthesis</keyword>
<keyword id="KW-0170">Cobalt</keyword>
<keyword id="KW-0963">Cytoplasm</keyword>
<keyword id="KW-0378">Hydrolase</keyword>
<keyword id="KW-0479">Metal-binding</keyword>
<keyword id="KW-0862">Zinc</keyword>
<sequence length="383" mass="42337">MKNKLPPFIEIYRALIATPSISATEEALDQSNADLITLLADWFKDLGFNVEVQPVPGTRNKFNMLASCGQGAGGLLLAGHTDTVPFDDGRWTRDPFTLTEHDGKLYGLGTADMKGFFAFILDALRDVDVTKLKKPLYILATADEETSMAGARYFAETTALRPDCAIIGEPTSLQPVRAHKGHISNAIRIQGQSGHSSDPARGVNAIELMHDAIGHILQLRDNLKERYHYEAFTVPYPTLNLGHIHGGDASNRICACCELHMDIRPLPGMTLNELNGLLNDALAPVSERWPGRLTVDELHPPIPGYECPPNHQLVEVVEKLLGAKTEVVNYCTEAPFIQTLCPTLVLGPGSINQAHQPDEYLETRFIKPTRELITQVIHHFCWH</sequence>
<gene>
    <name evidence="1" type="primary">argE</name>
    <name type="ordered locus">ECSE_4250</name>
</gene>
<organism>
    <name type="scientific">Escherichia coli (strain SE11)</name>
    <dbReference type="NCBI Taxonomy" id="409438"/>
    <lineage>
        <taxon>Bacteria</taxon>
        <taxon>Pseudomonadati</taxon>
        <taxon>Pseudomonadota</taxon>
        <taxon>Gammaproteobacteria</taxon>
        <taxon>Enterobacterales</taxon>
        <taxon>Enterobacteriaceae</taxon>
        <taxon>Escherichia</taxon>
    </lineage>
</organism>
<reference key="1">
    <citation type="journal article" date="2008" name="DNA Res.">
        <title>Complete genome sequence and comparative analysis of the wild-type commensal Escherichia coli strain SE11 isolated from a healthy adult.</title>
        <authorList>
            <person name="Oshima K."/>
            <person name="Toh H."/>
            <person name="Ogura Y."/>
            <person name="Sasamoto H."/>
            <person name="Morita H."/>
            <person name="Park S.-H."/>
            <person name="Ooka T."/>
            <person name="Iyoda S."/>
            <person name="Taylor T.D."/>
            <person name="Hayashi T."/>
            <person name="Itoh K."/>
            <person name="Hattori M."/>
        </authorList>
    </citation>
    <scope>NUCLEOTIDE SEQUENCE [LARGE SCALE GENOMIC DNA]</scope>
    <source>
        <strain>SE11</strain>
    </source>
</reference>